<protein>
    <recommendedName>
        <fullName evidence="1">Dual-specificity RNA methyltransferase RlmN</fullName>
        <ecNumber evidence="1">2.1.1.192</ecNumber>
    </recommendedName>
    <alternativeName>
        <fullName evidence="1">23S rRNA (adenine(2503)-C(2))-methyltransferase</fullName>
    </alternativeName>
    <alternativeName>
        <fullName evidence="1">23S rRNA m2A2503 methyltransferase</fullName>
    </alternativeName>
    <alternativeName>
        <fullName evidence="1">Ribosomal RNA large subunit methyltransferase N</fullName>
    </alternativeName>
    <alternativeName>
        <fullName evidence="1">tRNA (adenine(37)-C(2))-methyltransferase</fullName>
    </alternativeName>
    <alternativeName>
        <fullName evidence="1">tRNA m2A37 methyltransferase</fullName>
    </alternativeName>
</protein>
<name>RLMN_ALIFM</name>
<gene>
    <name evidence="1" type="primary">rlmN</name>
    <name type="ordered locus">VFMJ11_0640</name>
</gene>
<evidence type="ECO:0000255" key="1">
    <source>
        <dbReference type="HAMAP-Rule" id="MF_01849"/>
    </source>
</evidence>
<evidence type="ECO:0000255" key="2">
    <source>
        <dbReference type="PROSITE-ProRule" id="PRU01266"/>
    </source>
</evidence>
<keyword id="KW-0004">4Fe-4S</keyword>
<keyword id="KW-0963">Cytoplasm</keyword>
<keyword id="KW-1015">Disulfide bond</keyword>
<keyword id="KW-0408">Iron</keyword>
<keyword id="KW-0411">Iron-sulfur</keyword>
<keyword id="KW-0479">Metal-binding</keyword>
<keyword id="KW-0489">Methyltransferase</keyword>
<keyword id="KW-0698">rRNA processing</keyword>
<keyword id="KW-0949">S-adenosyl-L-methionine</keyword>
<keyword id="KW-0808">Transferase</keyword>
<keyword id="KW-0819">tRNA processing</keyword>
<comment type="function">
    <text evidence="1">Specifically methylates position 2 of adenine 2503 in 23S rRNA and position 2 of adenine 37 in tRNAs. m2A2503 modification seems to play a crucial role in the proofreading step occurring at the peptidyl transferase center and thus would serve to optimize ribosomal fidelity.</text>
</comment>
<comment type="catalytic activity">
    <reaction evidence="1">
        <text>adenosine(2503) in 23S rRNA + 2 reduced [2Fe-2S]-[ferredoxin] + 2 S-adenosyl-L-methionine = 2-methyladenosine(2503) in 23S rRNA + 5'-deoxyadenosine + L-methionine + 2 oxidized [2Fe-2S]-[ferredoxin] + S-adenosyl-L-homocysteine</text>
        <dbReference type="Rhea" id="RHEA:42916"/>
        <dbReference type="Rhea" id="RHEA-COMP:10000"/>
        <dbReference type="Rhea" id="RHEA-COMP:10001"/>
        <dbReference type="Rhea" id="RHEA-COMP:10152"/>
        <dbReference type="Rhea" id="RHEA-COMP:10282"/>
        <dbReference type="ChEBI" id="CHEBI:17319"/>
        <dbReference type="ChEBI" id="CHEBI:33737"/>
        <dbReference type="ChEBI" id="CHEBI:33738"/>
        <dbReference type="ChEBI" id="CHEBI:57844"/>
        <dbReference type="ChEBI" id="CHEBI:57856"/>
        <dbReference type="ChEBI" id="CHEBI:59789"/>
        <dbReference type="ChEBI" id="CHEBI:74411"/>
        <dbReference type="ChEBI" id="CHEBI:74497"/>
        <dbReference type="EC" id="2.1.1.192"/>
    </reaction>
</comment>
<comment type="catalytic activity">
    <reaction evidence="1">
        <text>adenosine(37) in tRNA + 2 reduced [2Fe-2S]-[ferredoxin] + 2 S-adenosyl-L-methionine = 2-methyladenosine(37) in tRNA + 5'-deoxyadenosine + L-methionine + 2 oxidized [2Fe-2S]-[ferredoxin] + S-adenosyl-L-homocysteine</text>
        <dbReference type="Rhea" id="RHEA:43332"/>
        <dbReference type="Rhea" id="RHEA-COMP:10000"/>
        <dbReference type="Rhea" id="RHEA-COMP:10001"/>
        <dbReference type="Rhea" id="RHEA-COMP:10162"/>
        <dbReference type="Rhea" id="RHEA-COMP:10485"/>
        <dbReference type="ChEBI" id="CHEBI:17319"/>
        <dbReference type="ChEBI" id="CHEBI:33737"/>
        <dbReference type="ChEBI" id="CHEBI:33738"/>
        <dbReference type="ChEBI" id="CHEBI:57844"/>
        <dbReference type="ChEBI" id="CHEBI:57856"/>
        <dbReference type="ChEBI" id="CHEBI:59789"/>
        <dbReference type="ChEBI" id="CHEBI:74411"/>
        <dbReference type="ChEBI" id="CHEBI:74497"/>
        <dbReference type="EC" id="2.1.1.192"/>
    </reaction>
</comment>
<comment type="cofactor">
    <cofactor evidence="1">
        <name>[4Fe-4S] cluster</name>
        <dbReference type="ChEBI" id="CHEBI:49883"/>
    </cofactor>
    <text evidence="1">Binds 1 [4Fe-4S] cluster. The cluster is coordinated with 3 cysteines and an exchangeable S-adenosyl-L-methionine.</text>
</comment>
<comment type="subcellular location">
    <subcellularLocation>
        <location evidence="1">Cytoplasm</location>
    </subcellularLocation>
</comment>
<comment type="miscellaneous">
    <text evidence="1">Reaction proceeds by a ping-pong mechanism involving intermediate methylation of a conserved cysteine residue.</text>
</comment>
<comment type="similarity">
    <text evidence="1">Belongs to the radical SAM superfamily. RlmN family.</text>
</comment>
<sequence length="372" mass="41892">MTTAKINLLDFDRKGLRAFFSEELGEKAFRADQVMKWMYHFGCDDFDQMNNINKKLREKLKNKCEIRAPYVSEAQHSSDGTIKWAMKVGDQDVETVYIPDGDRATLCVSSQVGCALECKFCSTAQQGFNRNLKVSEIVGQIWRAAREIGLEKETGRRPITNVVMMGMGEPLLNMKNLIPALEIMLDDLGFALSKRRVTVSTSGVVSGLDQMTGKIDVALAISLHAPTDELRSQIMPINDRWDIDAFLASVRRYIASSNANRGRVTVEYVLLDHVNDDMDHARQLAELLKDTPAKINLIPFNPYPGSPYKKPSNSRIDRFMKTLMEYDYTVTIRKTRGDDIDAACGQLVGDVIDRTKRTKVKQQGEAIPVKTV</sequence>
<reference key="1">
    <citation type="submission" date="2008-08" db="EMBL/GenBank/DDBJ databases">
        <title>Complete sequence of Vibrio fischeri strain MJ11.</title>
        <authorList>
            <person name="Mandel M.J."/>
            <person name="Stabb E.V."/>
            <person name="Ruby E.G."/>
            <person name="Ferriera S."/>
            <person name="Johnson J."/>
            <person name="Kravitz S."/>
            <person name="Beeson K."/>
            <person name="Sutton G."/>
            <person name="Rogers Y.-H."/>
            <person name="Friedman R."/>
            <person name="Frazier M."/>
            <person name="Venter J.C."/>
        </authorList>
    </citation>
    <scope>NUCLEOTIDE SEQUENCE [LARGE SCALE GENOMIC DNA]</scope>
    <source>
        <strain>MJ11</strain>
    </source>
</reference>
<proteinExistence type="inferred from homology"/>
<accession>B5FAW9</accession>
<organism>
    <name type="scientific">Aliivibrio fischeri (strain MJ11)</name>
    <name type="common">Vibrio fischeri</name>
    <dbReference type="NCBI Taxonomy" id="388396"/>
    <lineage>
        <taxon>Bacteria</taxon>
        <taxon>Pseudomonadati</taxon>
        <taxon>Pseudomonadota</taxon>
        <taxon>Gammaproteobacteria</taxon>
        <taxon>Vibrionales</taxon>
        <taxon>Vibrionaceae</taxon>
        <taxon>Aliivibrio</taxon>
    </lineage>
</organism>
<feature type="chain" id="PRO_1000188618" description="Dual-specificity RNA methyltransferase RlmN">
    <location>
        <begin position="1"/>
        <end position="372"/>
    </location>
</feature>
<feature type="domain" description="Radical SAM core" evidence="2">
    <location>
        <begin position="100"/>
        <end position="339"/>
    </location>
</feature>
<feature type="active site" description="Proton acceptor" evidence="1">
    <location>
        <position position="94"/>
    </location>
</feature>
<feature type="active site" description="S-methylcysteine intermediate" evidence="1">
    <location>
        <position position="344"/>
    </location>
</feature>
<feature type="binding site" evidence="1">
    <location>
        <position position="114"/>
    </location>
    <ligand>
        <name>[4Fe-4S] cluster</name>
        <dbReference type="ChEBI" id="CHEBI:49883"/>
        <note>4Fe-4S-S-AdoMet</note>
    </ligand>
</feature>
<feature type="binding site" evidence="1">
    <location>
        <position position="118"/>
    </location>
    <ligand>
        <name>[4Fe-4S] cluster</name>
        <dbReference type="ChEBI" id="CHEBI:49883"/>
        <note>4Fe-4S-S-AdoMet</note>
    </ligand>
</feature>
<feature type="binding site" evidence="1">
    <location>
        <position position="121"/>
    </location>
    <ligand>
        <name>[4Fe-4S] cluster</name>
        <dbReference type="ChEBI" id="CHEBI:49883"/>
        <note>4Fe-4S-S-AdoMet</note>
    </ligand>
</feature>
<feature type="binding site" evidence="1">
    <location>
        <begin position="168"/>
        <end position="169"/>
    </location>
    <ligand>
        <name>S-adenosyl-L-methionine</name>
        <dbReference type="ChEBI" id="CHEBI:59789"/>
    </ligand>
</feature>
<feature type="binding site" evidence="1">
    <location>
        <position position="200"/>
    </location>
    <ligand>
        <name>S-adenosyl-L-methionine</name>
        <dbReference type="ChEBI" id="CHEBI:59789"/>
    </ligand>
</feature>
<feature type="binding site" evidence="1">
    <location>
        <begin position="222"/>
        <end position="224"/>
    </location>
    <ligand>
        <name>S-adenosyl-L-methionine</name>
        <dbReference type="ChEBI" id="CHEBI:59789"/>
    </ligand>
</feature>
<feature type="binding site" evidence="1">
    <location>
        <position position="301"/>
    </location>
    <ligand>
        <name>S-adenosyl-L-methionine</name>
        <dbReference type="ChEBI" id="CHEBI:59789"/>
    </ligand>
</feature>
<feature type="disulfide bond" description="(transient)" evidence="1">
    <location>
        <begin position="107"/>
        <end position="344"/>
    </location>
</feature>
<dbReference type="EC" id="2.1.1.192" evidence="1"/>
<dbReference type="EMBL" id="CP001139">
    <property type="protein sequence ID" value="ACH67002.1"/>
    <property type="molecule type" value="Genomic_DNA"/>
</dbReference>
<dbReference type="RefSeq" id="WP_012534128.1">
    <property type="nucleotide sequence ID" value="NC_011184.1"/>
</dbReference>
<dbReference type="SMR" id="B5FAW9"/>
<dbReference type="KEGG" id="vfm:VFMJ11_0640"/>
<dbReference type="HOGENOM" id="CLU_029101_0_0_6"/>
<dbReference type="Proteomes" id="UP000001857">
    <property type="component" value="Chromosome I"/>
</dbReference>
<dbReference type="GO" id="GO:0005737">
    <property type="term" value="C:cytoplasm"/>
    <property type="evidence" value="ECO:0007669"/>
    <property type="project" value="UniProtKB-SubCell"/>
</dbReference>
<dbReference type="GO" id="GO:0051539">
    <property type="term" value="F:4 iron, 4 sulfur cluster binding"/>
    <property type="evidence" value="ECO:0007669"/>
    <property type="project" value="UniProtKB-UniRule"/>
</dbReference>
<dbReference type="GO" id="GO:0046872">
    <property type="term" value="F:metal ion binding"/>
    <property type="evidence" value="ECO:0007669"/>
    <property type="project" value="UniProtKB-KW"/>
</dbReference>
<dbReference type="GO" id="GO:0070040">
    <property type="term" value="F:rRNA (adenine(2503)-C2-)-methyltransferase activity"/>
    <property type="evidence" value="ECO:0007669"/>
    <property type="project" value="UniProtKB-UniRule"/>
</dbReference>
<dbReference type="GO" id="GO:0019843">
    <property type="term" value="F:rRNA binding"/>
    <property type="evidence" value="ECO:0007669"/>
    <property type="project" value="UniProtKB-UniRule"/>
</dbReference>
<dbReference type="GO" id="GO:0002935">
    <property type="term" value="F:tRNA (adenine(37)-C2)-methyltransferase activity"/>
    <property type="evidence" value="ECO:0007669"/>
    <property type="project" value="UniProtKB-UniRule"/>
</dbReference>
<dbReference type="GO" id="GO:0000049">
    <property type="term" value="F:tRNA binding"/>
    <property type="evidence" value="ECO:0007669"/>
    <property type="project" value="UniProtKB-UniRule"/>
</dbReference>
<dbReference type="GO" id="GO:0070475">
    <property type="term" value="P:rRNA base methylation"/>
    <property type="evidence" value="ECO:0007669"/>
    <property type="project" value="UniProtKB-UniRule"/>
</dbReference>
<dbReference type="GO" id="GO:0030488">
    <property type="term" value="P:tRNA methylation"/>
    <property type="evidence" value="ECO:0007669"/>
    <property type="project" value="UniProtKB-UniRule"/>
</dbReference>
<dbReference type="CDD" id="cd01335">
    <property type="entry name" value="Radical_SAM"/>
    <property type="match status" value="1"/>
</dbReference>
<dbReference type="FunFam" id="1.10.150.530:FF:000003">
    <property type="entry name" value="Dual-specificity RNA methyltransferase RlmN"/>
    <property type="match status" value="1"/>
</dbReference>
<dbReference type="FunFam" id="3.20.20.70:FF:000008">
    <property type="entry name" value="Dual-specificity RNA methyltransferase RlmN"/>
    <property type="match status" value="1"/>
</dbReference>
<dbReference type="Gene3D" id="1.10.150.530">
    <property type="match status" value="1"/>
</dbReference>
<dbReference type="Gene3D" id="3.20.20.70">
    <property type="entry name" value="Aldolase class I"/>
    <property type="match status" value="1"/>
</dbReference>
<dbReference type="HAMAP" id="MF_01849">
    <property type="entry name" value="RNA_methyltr_RlmN"/>
    <property type="match status" value="1"/>
</dbReference>
<dbReference type="InterPro" id="IPR013785">
    <property type="entry name" value="Aldolase_TIM"/>
</dbReference>
<dbReference type="InterPro" id="IPR040072">
    <property type="entry name" value="Methyltransferase_A"/>
</dbReference>
<dbReference type="InterPro" id="IPR048641">
    <property type="entry name" value="RlmN_N"/>
</dbReference>
<dbReference type="InterPro" id="IPR027492">
    <property type="entry name" value="RNA_MTrfase_RlmN"/>
</dbReference>
<dbReference type="InterPro" id="IPR004383">
    <property type="entry name" value="rRNA_lsu_MTrfase_RlmN/Cfr"/>
</dbReference>
<dbReference type="InterPro" id="IPR007197">
    <property type="entry name" value="rSAM"/>
</dbReference>
<dbReference type="NCBIfam" id="NF008396">
    <property type="entry name" value="PRK11194.1"/>
    <property type="match status" value="1"/>
</dbReference>
<dbReference type="NCBIfam" id="TIGR00048">
    <property type="entry name" value="rRNA_mod_RlmN"/>
    <property type="match status" value="1"/>
</dbReference>
<dbReference type="PANTHER" id="PTHR30544">
    <property type="entry name" value="23S RRNA METHYLTRANSFERASE"/>
    <property type="match status" value="1"/>
</dbReference>
<dbReference type="PANTHER" id="PTHR30544:SF5">
    <property type="entry name" value="RADICAL SAM CORE DOMAIN-CONTAINING PROTEIN"/>
    <property type="match status" value="1"/>
</dbReference>
<dbReference type="Pfam" id="PF04055">
    <property type="entry name" value="Radical_SAM"/>
    <property type="match status" value="1"/>
</dbReference>
<dbReference type="Pfam" id="PF21016">
    <property type="entry name" value="RlmN_N"/>
    <property type="match status" value="1"/>
</dbReference>
<dbReference type="PIRSF" id="PIRSF006004">
    <property type="entry name" value="CHP00048"/>
    <property type="match status" value="1"/>
</dbReference>
<dbReference type="SFLD" id="SFLDF00275">
    <property type="entry name" value="adenosine_C2_methyltransferase"/>
    <property type="match status" value="1"/>
</dbReference>
<dbReference type="SFLD" id="SFLDG01062">
    <property type="entry name" value="methyltransferase_(Class_A)"/>
    <property type="match status" value="1"/>
</dbReference>
<dbReference type="SUPFAM" id="SSF102114">
    <property type="entry name" value="Radical SAM enzymes"/>
    <property type="match status" value="1"/>
</dbReference>
<dbReference type="PROSITE" id="PS51918">
    <property type="entry name" value="RADICAL_SAM"/>
    <property type="match status" value="1"/>
</dbReference>